<protein>
    <recommendedName>
        <fullName>Uncharacterized protein in VpX 5'region</fullName>
    </recommendedName>
</protein>
<reference key="1">
    <citation type="journal article" date="1990" name="Virology">
        <title>Map location of lactate dehydrogenase-elevating virus (LDV) capsid protein (Vp1) gene.</title>
        <authorList>
            <person name="Godeny E.K."/>
            <person name="Speicher D.W."/>
            <person name="Brinton M.A."/>
        </authorList>
    </citation>
    <scope>NUCLEOTIDE SEQUENCE [GENOMIC RNA]</scope>
</reference>
<organismHost>
    <name type="scientific">Mus musculus domesticus</name>
    <name type="common">western European house mouse</name>
    <dbReference type="NCBI Taxonomy" id="10092"/>
</organismHost>
<name>YVPX_LDV</name>
<accession>P24124</accession>
<feature type="chain" id="PRO_0000080885" description="Uncharacterized protein in VpX 5'region">
    <location>
        <begin position="1" status="less than"/>
        <end position="48"/>
    </location>
</feature>
<feature type="non-terminal residue">
    <location>
        <position position="1"/>
    </location>
</feature>
<dbReference type="EMBL" id="M55296">
    <property type="protein sequence ID" value="AAA46270.1"/>
    <property type="molecule type" value="Genomic_RNA"/>
</dbReference>
<dbReference type="GO" id="GO:0019031">
    <property type="term" value="C:viral envelope"/>
    <property type="evidence" value="ECO:0007669"/>
    <property type="project" value="InterPro"/>
</dbReference>
<dbReference type="InterPro" id="IPR001332">
    <property type="entry name" value="Arteri_GP5"/>
</dbReference>
<dbReference type="Pfam" id="PF00951">
    <property type="entry name" value="Arteri_Gl"/>
    <property type="match status" value="1"/>
</dbReference>
<organism>
    <name type="scientific">Lactate dehydrogenase-elevating virus</name>
    <name type="common">LDV</name>
    <dbReference type="NCBI Taxonomy" id="11048"/>
    <lineage>
        <taxon>Viruses</taxon>
        <taxon>Riboviria</taxon>
        <taxon>Orthornavirae</taxon>
        <taxon>Pisuviricota</taxon>
        <taxon>Pisoniviricetes</taxon>
        <taxon>Nidovirales</taxon>
        <taxon>Arnidovirineae</taxon>
        <taxon>Arteriviridae</taxon>
        <taxon>Variarterivirinae</taxon>
        <taxon>Gammaarterivirus</taxon>
        <taxon>Gammaarterivirus lacdeh</taxon>
    </lineage>
</organism>
<sequence>VFRNRSSVLVEQHGKVLLQGQPIEVKTVVLDGVKAVRAKTVPAEKWEA</sequence>
<proteinExistence type="predicted"/>